<evidence type="ECO:0000255" key="1">
    <source>
        <dbReference type="HAMAP-Rule" id="MF_00952"/>
    </source>
</evidence>
<evidence type="ECO:0000255" key="2">
    <source>
        <dbReference type="PROSITE-ProRule" id="PRU01383"/>
    </source>
</evidence>
<evidence type="ECO:0000305" key="3"/>
<feature type="chain" id="PRO_0000145149" description="DNA topoisomerase 1">
    <location>
        <begin position="1"/>
        <end position="868"/>
    </location>
</feature>
<feature type="domain" description="Toprim" evidence="1">
    <location>
        <begin position="3"/>
        <end position="148"/>
    </location>
</feature>
<feature type="domain" description="Topo IA-type catalytic" evidence="2">
    <location>
        <begin position="164"/>
        <end position="581"/>
    </location>
</feature>
<feature type="zinc finger region" description="C4-type 1">
    <location>
        <begin position="605"/>
        <end position="636"/>
    </location>
</feature>
<feature type="zinc finger region" description="C4-type 2">
    <location>
        <begin position="667"/>
        <end position="694"/>
    </location>
</feature>
<feature type="zinc finger region" description="C4-type 3">
    <location>
        <begin position="716"/>
        <end position="739"/>
    </location>
</feature>
<feature type="region of interest" description="Interaction with DNA" evidence="1">
    <location>
        <begin position="198"/>
        <end position="203"/>
    </location>
</feature>
<feature type="active site" description="O-(5'-phospho-DNA)-tyrosine intermediate" evidence="2">
    <location>
        <position position="325"/>
    </location>
</feature>
<feature type="binding site" evidence="1">
    <location>
        <position position="9"/>
    </location>
    <ligand>
        <name>Mg(2+)</name>
        <dbReference type="ChEBI" id="CHEBI:18420"/>
        <note>catalytic</note>
    </ligand>
</feature>
<feature type="binding site" evidence="1">
    <location>
        <position position="117"/>
    </location>
    <ligand>
        <name>Mg(2+)</name>
        <dbReference type="ChEBI" id="CHEBI:18420"/>
        <note>catalytic</note>
    </ligand>
</feature>
<feature type="site" description="Interaction with DNA" evidence="1">
    <location>
        <position position="33"/>
    </location>
</feature>
<feature type="site" description="Interaction with DNA" evidence="1">
    <location>
        <position position="174"/>
    </location>
</feature>
<feature type="site" description="Interaction with DNA" evidence="1">
    <location>
        <position position="175"/>
    </location>
</feature>
<feature type="site" description="Interaction with DNA" evidence="1">
    <location>
        <position position="178"/>
    </location>
</feature>
<feature type="site" description="Interaction with DNA" evidence="1">
    <location>
        <position position="190"/>
    </location>
</feature>
<feature type="site" description="Interaction with DNA" evidence="1">
    <location>
        <position position="327"/>
    </location>
</feature>
<feature type="site" description="Interaction with DNA" evidence="1">
    <location>
        <position position="513"/>
    </location>
</feature>
<feature type="sequence conflict" description="In Ref. 2; AAC23012." evidence="3" ref="2">
    <original>T</original>
    <variation>S</variation>
    <location>
        <position position="343"/>
    </location>
</feature>
<keyword id="KW-0238">DNA-binding</keyword>
<keyword id="KW-0413">Isomerase</keyword>
<keyword id="KW-0460">Magnesium</keyword>
<keyword id="KW-0479">Metal-binding</keyword>
<keyword id="KW-1185">Reference proteome</keyword>
<keyword id="KW-0677">Repeat</keyword>
<keyword id="KW-0799">Topoisomerase</keyword>
<keyword id="KW-0862">Zinc</keyword>
<keyword id="KW-0863">Zinc-finger</keyword>
<comment type="function">
    <text evidence="1">Releases the supercoiling and torsional tension of DNA, which is introduced during the DNA replication and transcription, by transiently cleaving and rejoining one strand of the DNA duplex. Introduces a single-strand break via transesterification at a target site in duplex DNA. The scissile phosphodiester is attacked by the catalytic tyrosine of the enzyme, resulting in the formation of a DNA-(5'-phosphotyrosyl)-enzyme intermediate and the expulsion of a 3'-OH DNA strand. The free DNA strand then undergoes passage around the unbroken strand, thus removing DNA supercoils. Finally, in the religation step, the DNA 3'-OH attacks the covalent intermediate to expel the active-site tyrosine and restore the DNA phosphodiester backbone.</text>
</comment>
<comment type="catalytic activity">
    <reaction evidence="1">
        <text>ATP-independent breakage of single-stranded DNA, followed by passage and rejoining.</text>
        <dbReference type="EC" id="5.6.2.1"/>
    </reaction>
</comment>
<comment type="cofactor">
    <cofactor evidence="1">
        <name>Mg(2+)</name>
        <dbReference type="ChEBI" id="CHEBI:18420"/>
    </cofactor>
</comment>
<comment type="subunit">
    <text evidence="1">Monomer.</text>
</comment>
<comment type="similarity">
    <text evidence="1">Belongs to the type IA topoisomerase family.</text>
</comment>
<gene>
    <name evidence="1" type="primary">topA</name>
    <name type="ordered locus">HI_1365</name>
</gene>
<protein>
    <recommendedName>
        <fullName evidence="1">DNA topoisomerase 1</fullName>
        <ecNumber evidence="1">5.6.2.1</ecNumber>
    </recommendedName>
    <alternativeName>
        <fullName evidence="1">DNA topoisomerase I</fullName>
    </alternativeName>
    <alternativeName>
        <fullName>Omega-protein</fullName>
    </alternativeName>
    <alternativeName>
        <fullName>Relaxing enzyme</fullName>
    </alternativeName>
    <alternativeName>
        <fullName>Swivelase</fullName>
    </alternativeName>
    <alternativeName>
        <fullName>Untwisting enzyme</fullName>
    </alternativeName>
</protein>
<dbReference type="EC" id="5.6.2.1" evidence="1"/>
<dbReference type="EMBL" id="U20964">
    <property type="protein sequence ID" value="AAC43727.1"/>
    <property type="molecule type" value="Genomic_DNA"/>
</dbReference>
<dbReference type="EMBL" id="L42023">
    <property type="protein sequence ID" value="AAC23012.1"/>
    <property type="molecule type" value="Genomic_DNA"/>
</dbReference>
<dbReference type="PIR" id="G64119">
    <property type="entry name" value="G64119"/>
</dbReference>
<dbReference type="RefSeq" id="NP_439516.1">
    <property type="nucleotide sequence ID" value="NC_000907.1"/>
</dbReference>
<dbReference type="SMR" id="P43012"/>
<dbReference type="STRING" id="71421.HI_1365"/>
<dbReference type="EnsemblBacteria" id="AAC23012">
    <property type="protein sequence ID" value="AAC23012"/>
    <property type="gene ID" value="HI_1365"/>
</dbReference>
<dbReference type="KEGG" id="hin:HI_1365"/>
<dbReference type="PATRIC" id="fig|71421.8.peg.1419"/>
<dbReference type="eggNOG" id="COG0550">
    <property type="taxonomic scope" value="Bacteria"/>
</dbReference>
<dbReference type="HOGENOM" id="CLU_002929_4_3_6"/>
<dbReference type="OrthoDB" id="9804262at2"/>
<dbReference type="PhylomeDB" id="P43012"/>
<dbReference type="BioCyc" id="HINF71421:G1GJ1-1390-MONOMER"/>
<dbReference type="Proteomes" id="UP000000579">
    <property type="component" value="Chromosome"/>
</dbReference>
<dbReference type="GO" id="GO:0005694">
    <property type="term" value="C:chromosome"/>
    <property type="evidence" value="ECO:0007669"/>
    <property type="project" value="InterPro"/>
</dbReference>
<dbReference type="GO" id="GO:0003677">
    <property type="term" value="F:DNA binding"/>
    <property type="evidence" value="ECO:0007669"/>
    <property type="project" value="UniProtKB-KW"/>
</dbReference>
<dbReference type="GO" id="GO:0003917">
    <property type="term" value="F:DNA topoisomerase type I (single strand cut, ATP-independent) activity"/>
    <property type="evidence" value="ECO:0007669"/>
    <property type="project" value="UniProtKB-UniRule"/>
</dbReference>
<dbReference type="GO" id="GO:0008270">
    <property type="term" value="F:zinc ion binding"/>
    <property type="evidence" value="ECO:0007669"/>
    <property type="project" value="UniProtKB-KW"/>
</dbReference>
<dbReference type="GO" id="GO:0006265">
    <property type="term" value="P:DNA topological change"/>
    <property type="evidence" value="ECO:0007669"/>
    <property type="project" value="UniProtKB-UniRule"/>
</dbReference>
<dbReference type="CDD" id="cd00186">
    <property type="entry name" value="TOP1Ac"/>
    <property type="match status" value="1"/>
</dbReference>
<dbReference type="CDD" id="cd03363">
    <property type="entry name" value="TOPRIM_TopoIA_TopoI"/>
    <property type="match status" value="1"/>
</dbReference>
<dbReference type="FunFam" id="1.10.290.10:FF:000002">
    <property type="entry name" value="DNA topoisomerase 1"/>
    <property type="match status" value="1"/>
</dbReference>
<dbReference type="FunFam" id="3.30.65.10:FF:000002">
    <property type="entry name" value="DNA topoisomerase 1"/>
    <property type="match status" value="1"/>
</dbReference>
<dbReference type="FunFam" id="3.40.50.140:FF:000001">
    <property type="entry name" value="DNA topoisomerase 1"/>
    <property type="match status" value="1"/>
</dbReference>
<dbReference type="Gene3D" id="2.20.25.10">
    <property type="match status" value="1"/>
</dbReference>
<dbReference type="Gene3D" id="3.40.50.140">
    <property type="match status" value="1"/>
</dbReference>
<dbReference type="Gene3D" id="3.30.65.10">
    <property type="entry name" value="Bacterial Topoisomerase I, domain 1"/>
    <property type="match status" value="3"/>
</dbReference>
<dbReference type="Gene3D" id="1.10.460.10">
    <property type="entry name" value="Topoisomerase I, domain 2"/>
    <property type="match status" value="1"/>
</dbReference>
<dbReference type="Gene3D" id="2.70.20.10">
    <property type="entry name" value="Topoisomerase I, domain 3"/>
    <property type="match status" value="1"/>
</dbReference>
<dbReference type="Gene3D" id="1.10.290.10">
    <property type="entry name" value="Topoisomerase I, domain 4"/>
    <property type="match status" value="1"/>
</dbReference>
<dbReference type="HAMAP" id="MF_00952">
    <property type="entry name" value="Topoisom_1_prok"/>
    <property type="match status" value="1"/>
</dbReference>
<dbReference type="InterPro" id="IPR049330">
    <property type="entry name" value="TOP1_Znf"/>
</dbReference>
<dbReference type="InterPro" id="IPR000380">
    <property type="entry name" value="Topo_IA"/>
</dbReference>
<dbReference type="InterPro" id="IPR003601">
    <property type="entry name" value="Topo_IA_2"/>
</dbReference>
<dbReference type="InterPro" id="IPR023406">
    <property type="entry name" value="Topo_IA_AS"/>
</dbReference>
<dbReference type="InterPro" id="IPR013497">
    <property type="entry name" value="Topo_IA_cen"/>
</dbReference>
<dbReference type="InterPro" id="IPR013824">
    <property type="entry name" value="Topo_IA_cen_sub1"/>
</dbReference>
<dbReference type="InterPro" id="IPR013825">
    <property type="entry name" value="Topo_IA_cen_sub2"/>
</dbReference>
<dbReference type="InterPro" id="IPR013826">
    <property type="entry name" value="Topo_IA_cen_sub3"/>
</dbReference>
<dbReference type="InterPro" id="IPR023405">
    <property type="entry name" value="Topo_IA_core_domain"/>
</dbReference>
<dbReference type="InterPro" id="IPR003602">
    <property type="entry name" value="Topo_IA_DNA-bd_dom"/>
</dbReference>
<dbReference type="InterPro" id="IPR013498">
    <property type="entry name" value="Topo_IA_Znf"/>
</dbReference>
<dbReference type="InterPro" id="IPR005733">
    <property type="entry name" value="TopoI_bac-type"/>
</dbReference>
<dbReference type="InterPro" id="IPR013263">
    <property type="entry name" value="TopoI_Znr_bac"/>
</dbReference>
<dbReference type="InterPro" id="IPR028612">
    <property type="entry name" value="Topoisom_1_IA"/>
</dbReference>
<dbReference type="InterPro" id="IPR006171">
    <property type="entry name" value="TOPRIM_dom"/>
</dbReference>
<dbReference type="InterPro" id="IPR034149">
    <property type="entry name" value="TOPRIM_TopoI"/>
</dbReference>
<dbReference type="NCBIfam" id="TIGR01051">
    <property type="entry name" value="topA_bact"/>
    <property type="match status" value="1"/>
</dbReference>
<dbReference type="PANTHER" id="PTHR42785:SF1">
    <property type="entry name" value="DNA TOPOISOMERASE"/>
    <property type="match status" value="1"/>
</dbReference>
<dbReference type="PANTHER" id="PTHR42785">
    <property type="entry name" value="DNA TOPOISOMERASE, TYPE IA, CORE"/>
    <property type="match status" value="1"/>
</dbReference>
<dbReference type="Pfam" id="PF01131">
    <property type="entry name" value="Topoisom_bac"/>
    <property type="match status" value="1"/>
</dbReference>
<dbReference type="Pfam" id="PF01751">
    <property type="entry name" value="Toprim"/>
    <property type="match status" value="1"/>
</dbReference>
<dbReference type="Pfam" id="PF21372">
    <property type="entry name" value="Zn_ribbon_bTOP1"/>
    <property type="match status" value="1"/>
</dbReference>
<dbReference type="Pfam" id="PF01396">
    <property type="entry name" value="Zn_ribbon_Top1"/>
    <property type="match status" value="2"/>
</dbReference>
<dbReference type="Pfam" id="PF08272">
    <property type="entry name" value="Zn_Ribbon_Topo"/>
    <property type="match status" value="2"/>
</dbReference>
<dbReference type="PRINTS" id="PR00417">
    <property type="entry name" value="PRTPISMRASEI"/>
</dbReference>
<dbReference type="SMART" id="SM00437">
    <property type="entry name" value="TOP1Ac"/>
    <property type="match status" value="1"/>
</dbReference>
<dbReference type="SMART" id="SM00436">
    <property type="entry name" value="TOP1Bc"/>
    <property type="match status" value="1"/>
</dbReference>
<dbReference type="SMART" id="SM00493">
    <property type="entry name" value="TOPRIM"/>
    <property type="match status" value="1"/>
</dbReference>
<dbReference type="SUPFAM" id="SSF56712">
    <property type="entry name" value="Prokaryotic type I DNA topoisomerase"/>
    <property type="match status" value="1"/>
</dbReference>
<dbReference type="SUPFAM" id="SSF57783">
    <property type="entry name" value="Zinc beta-ribbon"/>
    <property type="match status" value="3"/>
</dbReference>
<dbReference type="PROSITE" id="PS00396">
    <property type="entry name" value="TOPO_IA_1"/>
    <property type="match status" value="1"/>
</dbReference>
<dbReference type="PROSITE" id="PS52039">
    <property type="entry name" value="TOPO_IA_2"/>
    <property type="match status" value="1"/>
</dbReference>
<dbReference type="PROSITE" id="PS50880">
    <property type="entry name" value="TOPRIM"/>
    <property type="match status" value="1"/>
</dbReference>
<organism>
    <name type="scientific">Haemophilus influenzae (strain ATCC 51907 / DSM 11121 / KW20 / Rd)</name>
    <dbReference type="NCBI Taxonomy" id="71421"/>
    <lineage>
        <taxon>Bacteria</taxon>
        <taxon>Pseudomonadati</taxon>
        <taxon>Pseudomonadota</taxon>
        <taxon>Gammaproteobacteria</taxon>
        <taxon>Pasteurellales</taxon>
        <taxon>Pasteurellaceae</taxon>
        <taxon>Haemophilus</taxon>
    </lineage>
</organism>
<proteinExistence type="inferred from homology"/>
<accession>P43012</accession>
<sequence length="868" mass="98144">MSKSLVIVESPAKAKTINKYLGSQYVVKSSVGHIRDLPTVGSSTGEKAKPISTKGMDAEEKAKIKAEKERNALVKRMGIDPYHDWKANYQILPGKEKVVSELKSLAKKADHIYLATDLDREGEAIAWHLREVIGGNDDRFSRVVFNEITKNAIKQAFEKPEQLNMDRVNAQQTRRFLDRVVGFMVSPLLWKKVARGLSAGRVQSVAVKLLVEREREIKAFQPEEYWEVAVLTNNQNKQAIRLDVTDYKGKKFDPKNQKEAQSAVDFLNVSDYVVTDLETKPTSSRPRAPFITSTLQQTASTRLGFGVKKTMMLAQRLYEAGYITYMRTDSTNLSQDALNMARTYIENHFGAQYLPEKPNFYSSKENAQEAHEAIRPSDIRALPESLEGMEKDAVRLYDLIWCQFLACQMPPAQYDSSTLTVTAGDYTLKAKGRILRFDGWTKVLPQIGKNPEDQELPSVTVSEKLALKEVQPTQHFTKPPARFTEAALVKELEKRGIGRPSTYAAIISTIQERGYVRTENRRFYAEKMGEIVTDRLNESFGELMNYDFTANMEDTLDKIASGSVNWKTELNQFFKDFSSQLSKAELDELEGGMRPNSLVETDIKCPTCGRNMAIRTASTGVFLGCTGYALPPKERCKTTINLIPEAELLNVLDESSETKALMDRKRCTKCGTAMDSYVIDAHRKIHICGNNPNCDGYLIEEGSFKIKGYDGPVVECDKCGADMHLKLGRFGKYMGCTNCDNTRKILKNGEVAPPKEEPVHFPELKCEKSDAYFVLRDGASGVFMSAHNFPKSRETRPVKIAELVQYRERLPEKLAYLADAPQKDPEENEAIVRFSRKEKKQYVTSEKEGKATKWIVDFTNGKWVERKK</sequence>
<name>TOP1_HAEIN</name>
<reference key="1">
    <citation type="journal article" date="1996" name="Gene">
        <title>Characterization of the Haemophilus influenzae topA locus: DNA topoisomerase I is required for genetic competence.</title>
        <authorList>
            <person name="Chandler M.S."/>
            <person name="Smith R.A."/>
        </authorList>
    </citation>
    <scope>NUCLEOTIDE SEQUENCE [GENOMIC DNA]</scope>
    <source>
        <strain>ATCC 51907 / DSM 11121 / KW20 / Rd</strain>
    </source>
</reference>
<reference key="2">
    <citation type="journal article" date="1995" name="Science">
        <title>Whole-genome random sequencing and assembly of Haemophilus influenzae Rd.</title>
        <authorList>
            <person name="Fleischmann R.D."/>
            <person name="Adams M.D."/>
            <person name="White O."/>
            <person name="Clayton R.A."/>
            <person name="Kirkness E.F."/>
            <person name="Kerlavage A.R."/>
            <person name="Bult C.J."/>
            <person name="Tomb J.-F."/>
            <person name="Dougherty B.A."/>
            <person name="Merrick J.M."/>
            <person name="McKenney K."/>
            <person name="Sutton G.G."/>
            <person name="FitzHugh W."/>
            <person name="Fields C.A."/>
            <person name="Gocayne J.D."/>
            <person name="Scott J.D."/>
            <person name="Shirley R."/>
            <person name="Liu L.-I."/>
            <person name="Glodek A."/>
            <person name="Kelley J.M."/>
            <person name="Weidman J.F."/>
            <person name="Phillips C.A."/>
            <person name="Spriggs T."/>
            <person name="Hedblom E."/>
            <person name="Cotton M.D."/>
            <person name="Utterback T.R."/>
            <person name="Hanna M.C."/>
            <person name="Nguyen D.T."/>
            <person name="Saudek D.M."/>
            <person name="Brandon R.C."/>
            <person name="Fine L.D."/>
            <person name="Fritchman J.L."/>
            <person name="Fuhrmann J.L."/>
            <person name="Geoghagen N.S.M."/>
            <person name="Gnehm C.L."/>
            <person name="McDonald L.A."/>
            <person name="Small K.V."/>
            <person name="Fraser C.M."/>
            <person name="Smith H.O."/>
            <person name="Venter J.C."/>
        </authorList>
    </citation>
    <scope>NUCLEOTIDE SEQUENCE [LARGE SCALE GENOMIC DNA]</scope>
    <source>
        <strain>ATCC 51907 / DSM 11121 / KW20 / Rd</strain>
    </source>
</reference>